<comment type="function">
    <text evidence="5">Might be involved in division plane determination.</text>
</comment>
<comment type="subunit">
    <text evidence="3">Interacts with KIN14B, CDKA-1, CKS1 and CKS2.</text>
</comment>
<comment type="subcellular location">
    <subcellularLocation>
        <location evidence="3">Cytoplasm</location>
    </subcellularLocation>
    <text evidence="3">Localizes at the pre-prophase band.</text>
</comment>
<comment type="alternative products">
    <event type="alternative splicing"/>
    <isoform>
        <id>F4JUQ2-1</id>
        <name>1</name>
        <sequence type="displayed"/>
    </isoform>
    <isoform>
        <id>F4JUQ2-2</id>
        <name>2</name>
        <sequence type="described" ref="VSP_058667"/>
    </isoform>
</comment>
<comment type="sequence caution" evidence="4">
    <conflict type="erroneous gene model prediction">
        <sequence resource="EMBL-CDS" id="CAB10210"/>
    </conflict>
</comment>
<comment type="sequence caution" evidence="4">
    <conflict type="erroneous gene model prediction">
        <sequence resource="EMBL-CDS" id="CAB78473"/>
    </conflict>
</comment>
<protein>
    <recommendedName>
        <fullName>KIN14B-interacting protein At4g14310</fullName>
    </recommendedName>
</protein>
<feature type="chain" id="PRO_0000438503" description="KIN14B-interacting protein At4g14310">
    <location>
        <begin position="1"/>
        <end position="920"/>
    </location>
</feature>
<feature type="region of interest" description="Disordered" evidence="2">
    <location>
        <begin position="1"/>
        <end position="199"/>
    </location>
</feature>
<feature type="region of interest" description="Disordered" evidence="2">
    <location>
        <begin position="309"/>
        <end position="375"/>
    </location>
</feature>
<feature type="coiled-coil region" evidence="1">
    <location>
        <begin position="435"/>
        <end position="463"/>
    </location>
</feature>
<feature type="compositionally biased region" description="Basic residues" evidence="2">
    <location>
        <begin position="1"/>
        <end position="10"/>
    </location>
</feature>
<feature type="compositionally biased region" description="Polar residues" evidence="2">
    <location>
        <begin position="35"/>
        <end position="54"/>
    </location>
</feature>
<feature type="compositionally biased region" description="Low complexity" evidence="2">
    <location>
        <begin position="90"/>
        <end position="105"/>
    </location>
</feature>
<feature type="compositionally biased region" description="Basic and acidic residues" evidence="2">
    <location>
        <begin position="112"/>
        <end position="135"/>
    </location>
</feature>
<feature type="compositionally biased region" description="Polar residues" evidence="2">
    <location>
        <begin position="137"/>
        <end position="147"/>
    </location>
</feature>
<feature type="compositionally biased region" description="Polar residues" evidence="2">
    <location>
        <begin position="166"/>
        <end position="184"/>
    </location>
</feature>
<feature type="compositionally biased region" description="Basic and acidic residues" evidence="2">
    <location>
        <begin position="327"/>
        <end position="337"/>
    </location>
</feature>
<feature type="compositionally biased region" description="Polar residues" evidence="2">
    <location>
        <begin position="345"/>
        <end position="355"/>
    </location>
</feature>
<feature type="compositionally biased region" description="Basic and acidic residues" evidence="2">
    <location>
        <begin position="357"/>
        <end position="374"/>
    </location>
</feature>
<feature type="splice variant" id="VSP_058667" description="In isoform 2.">
    <location>
        <begin position="508"/>
        <end position="534"/>
    </location>
</feature>
<organism evidence="8">
    <name type="scientific">Arabidopsis thaliana</name>
    <name type="common">Mouse-ear cress</name>
    <dbReference type="NCBI Taxonomy" id="3702"/>
    <lineage>
        <taxon>Eukaryota</taxon>
        <taxon>Viridiplantae</taxon>
        <taxon>Streptophyta</taxon>
        <taxon>Embryophyta</taxon>
        <taxon>Tracheophyta</taxon>
        <taxon>Spermatophyta</taxon>
        <taxon>Magnoliopsida</taxon>
        <taxon>eudicotyledons</taxon>
        <taxon>Gunneridae</taxon>
        <taxon>Pentapetalae</taxon>
        <taxon>rosids</taxon>
        <taxon>malvids</taxon>
        <taxon>Brassicales</taxon>
        <taxon>Brassicaceae</taxon>
        <taxon>Camelineae</taxon>
        <taxon>Arabidopsis</taxon>
    </lineage>
</organism>
<accession>F4JUQ2</accession>
<accession>F4JUQ1</accession>
<accession>O23289</accession>
<gene>
    <name evidence="6" type="ordered locus">At4g14310</name>
    <name evidence="7" type="ORF">dl3195c</name>
</gene>
<name>KCAI_ARATH</name>
<dbReference type="EMBL" id="Z97335">
    <property type="protein sequence ID" value="CAB10210.1"/>
    <property type="status" value="ALT_SEQ"/>
    <property type="molecule type" value="Genomic_DNA"/>
</dbReference>
<dbReference type="EMBL" id="AL161538">
    <property type="protein sequence ID" value="CAB78473.1"/>
    <property type="status" value="ALT_SEQ"/>
    <property type="molecule type" value="Genomic_DNA"/>
</dbReference>
<dbReference type="EMBL" id="CP002687">
    <property type="protein sequence ID" value="AEE83415.1"/>
    <property type="molecule type" value="Genomic_DNA"/>
</dbReference>
<dbReference type="EMBL" id="CP002687">
    <property type="protein sequence ID" value="AEE83416.1"/>
    <property type="molecule type" value="Genomic_DNA"/>
</dbReference>
<dbReference type="PIR" id="H71404">
    <property type="entry name" value="H71404"/>
</dbReference>
<dbReference type="RefSeq" id="NP_193167.3">
    <molecule id="F4JUQ2-2"/>
    <property type="nucleotide sequence ID" value="NM_117508.4"/>
</dbReference>
<dbReference type="RefSeq" id="NP_849378.2">
    <molecule id="F4JUQ2-1"/>
    <property type="nucleotide sequence ID" value="NM_179047.2"/>
</dbReference>
<dbReference type="FunCoup" id="F4JUQ2">
    <property type="interactions" value="561"/>
</dbReference>
<dbReference type="IntAct" id="F4JUQ2">
    <property type="interactions" value="13"/>
</dbReference>
<dbReference type="STRING" id="3702.F4JUQ2"/>
<dbReference type="iPTMnet" id="F4JUQ2"/>
<dbReference type="PaxDb" id="3702-AT4G14310.2"/>
<dbReference type="ProteomicsDB" id="250619">
    <molecule id="F4JUQ2-1"/>
</dbReference>
<dbReference type="EnsemblPlants" id="AT4G14310.1">
    <molecule id="F4JUQ2-2"/>
    <property type="protein sequence ID" value="AT4G14310.1"/>
    <property type="gene ID" value="AT4G14310"/>
</dbReference>
<dbReference type="EnsemblPlants" id="AT4G14310.2">
    <molecule id="F4JUQ2-1"/>
    <property type="protein sequence ID" value="AT4G14310.2"/>
    <property type="gene ID" value="AT4G14310"/>
</dbReference>
<dbReference type="GeneID" id="827072"/>
<dbReference type="Gramene" id="AT4G14310.1">
    <molecule id="F4JUQ2-2"/>
    <property type="protein sequence ID" value="AT4G14310.1"/>
    <property type="gene ID" value="AT4G14310"/>
</dbReference>
<dbReference type="Gramene" id="AT4G14310.2">
    <molecule id="F4JUQ2-1"/>
    <property type="protein sequence ID" value="AT4G14310.2"/>
    <property type="gene ID" value="AT4G14310"/>
</dbReference>
<dbReference type="KEGG" id="ath:AT4G14310"/>
<dbReference type="Araport" id="AT4G14310"/>
<dbReference type="TAIR" id="AT4G14310"/>
<dbReference type="eggNOG" id="ENOG502QUEI">
    <property type="taxonomic scope" value="Eukaryota"/>
</dbReference>
<dbReference type="HOGENOM" id="CLU_012519_1_0_1"/>
<dbReference type="InParanoid" id="F4JUQ2"/>
<dbReference type="OMA" id="WDYYSRE"/>
<dbReference type="PhylomeDB" id="F4JUQ2"/>
<dbReference type="PRO" id="PR:F4JUQ2"/>
<dbReference type="Proteomes" id="UP000006548">
    <property type="component" value="Chromosome 4"/>
</dbReference>
<dbReference type="ExpressionAtlas" id="F4JUQ2">
    <property type="expression patterns" value="baseline and differential"/>
</dbReference>
<dbReference type="GO" id="GO:0005737">
    <property type="term" value="C:cytoplasm"/>
    <property type="evidence" value="ECO:0007669"/>
    <property type="project" value="UniProtKB-SubCell"/>
</dbReference>
<dbReference type="GO" id="GO:0051301">
    <property type="term" value="P:cell division"/>
    <property type="evidence" value="ECO:0007669"/>
    <property type="project" value="UniProtKB-KW"/>
</dbReference>
<dbReference type="Gene3D" id="2.130.10.10">
    <property type="entry name" value="YVTN repeat-like/Quinoprotein amine dehydrogenase"/>
    <property type="match status" value="1"/>
</dbReference>
<dbReference type="InterPro" id="IPR045289">
    <property type="entry name" value="At4g14310-like"/>
</dbReference>
<dbReference type="InterPro" id="IPR011044">
    <property type="entry name" value="Quino_amine_DH_bsu"/>
</dbReference>
<dbReference type="InterPro" id="IPR015943">
    <property type="entry name" value="WD40/YVTN_repeat-like_dom_sf"/>
</dbReference>
<dbReference type="PANTHER" id="PTHR35492">
    <property type="entry name" value="TRANSDUCIN/WD40 REPEAT-LIKE SUPERFAMILY PROTEIN"/>
    <property type="match status" value="1"/>
</dbReference>
<dbReference type="PANTHER" id="PTHR35492:SF1">
    <property type="entry name" value="TRANSDUCIN_WD40 REPEAT-LIKE SUPERFAMILY PROTEIN"/>
    <property type="match status" value="1"/>
</dbReference>
<dbReference type="Pfam" id="PF25465">
    <property type="entry name" value="Beta-prop_At4g14310"/>
    <property type="match status" value="1"/>
</dbReference>
<dbReference type="SUPFAM" id="SSF50969">
    <property type="entry name" value="YVTN repeat-like/Quinoprotein amine dehydrogenase"/>
    <property type="match status" value="2"/>
</dbReference>
<keyword id="KW-0025">Alternative splicing</keyword>
<keyword id="KW-0131">Cell cycle</keyword>
<keyword id="KW-0132">Cell division</keyword>
<keyword id="KW-0175">Coiled coil</keyword>
<keyword id="KW-0963">Cytoplasm</keyword>
<keyword id="KW-1185">Reference proteome</keyword>
<evidence type="ECO:0000255" key="1"/>
<evidence type="ECO:0000256" key="2">
    <source>
        <dbReference type="SAM" id="MobiDB-lite"/>
    </source>
</evidence>
<evidence type="ECO:0000269" key="3">
    <source>
    </source>
</evidence>
<evidence type="ECO:0000305" key="4"/>
<evidence type="ECO:0000305" key="5">
    <source>
    </source>
</evidence>
<evidence type="ECO:0000312" key="6">
    <source>
        <dbReference type="Araport" id="AT4G14310"/>
    </source>
</evidence>
<evidence type="ECO:0000312" key="7">
    <source>
        <dbReference type="EMBL" id="CAB10210.1"/>
    </source>
</evidence>
<evidence type="ECO:0000312" key="8">
    <source>
        <dbReference type="Proteomes" id="UP000006548"/>
    </source>
</evidence>
<sequence>MSASTNRRRLKDINTGAGENPSSGKKPLRSVTPLPISSKNSNPALQKSLSSKENPNPKLSHRSFGSTQKPVLRPVPRIDKSAVSGEGRVTRSTSSGLRGRSSSPSDLIRVFSDLRKRNESRVIGEKGESGQDKKSGLKSSGFKQGTSEIKVEPSSVCEKADEGSSCPVNSSKFEGSSVARNSISDPKAHALVGSGEKSTVALKSDSKIEKTGKGTSVALRRKSLDNVGKAMEMSKDIRGNEGSSNSTAKYPSKLHEKLAFLEGKVKKIASDIKKTKDMLDLNNPDSSKVIISDIHQKITGIEKSMSHVIDGPEKNKTTKAKSSVKGLNKEELEDRLLPHQRLLRSRTQSKTSSHVSKGHDSVESNKAVNAEEKPSAPVEENAIALEFLASLDKEKVTFMSDQNALENLEVQEMDTEEPSKENDVSKDVNLTSNLTEILRANEALEEIDDEENREEMELEEIDDGCMYQLNDIGSKTSTGGWFVSEGEAVILAHDDGSCSYYDVANSEFMVNECNSLSIWVRLYEVTGVFGFVHYVKSVYSPPDGISPNTWRDCWVVRAPGADGCSGRYVVAASAGNTLESGFCSWDFYTKDIKALHIEDGSSRVSRTALAPLPNNTSHGRNTPACAVVPETQQWWYRPCGPLIASTGSFQSIVKVFDIRDGEQIMKWGVQNPVSALDYSSPLQWRNRGKLVIAETEAISVWDVNSLHPEAQHTISSSGRKISAFHINNTDAEVGGGVRQRVSSLDAEGNDGVFCTSDSINILDFRNPSGIGAKIPKLGVNAQCVSSRGDSVFLGCTNQKSTVKKQMASSSQVQQFSIRKQRLVSTYSLPDSNSHPHHSAITQVWGNSNFVMATSGMGLFVFDTAKEETLQQQPLTSDYGSVQTVREIIGPNDMYCPSFDYSGCRVLLISRDRPALWRYLL</sequence>
<proteinExistence type="evidence at protein level"/>
<reference key="1">
    <citation type="journal article" date="1998" name="Nature">
        <title>Analysis of 1.9 Mb of contiguous sequence from chromosome 4 of Arabidopsis thaliana.</title>
        <authorList>
            <person name="Bevan M."/>
            <person name="Bancroft I."/>
            <person name="Bent E."/>
            <person name="Love K."/>
            <person name="Goodman H.M."/>
            <person name="Dean C."/>
            <person name="Bergkamp R."/>
            <person name="Dirkse W."/>
            <person name="van Staveren M."/>
            <person name="Stiekema W."/>
            <person name="Drost L."/>
            <person name="Ridley P."/>
            <person name="Hudson S.-A."/>
            <person name="Patel K."/>
            <person name="Murphy G."/>
            <person name="Piffanelli P."/>
            <person name="Wedler H."/>
            <person name="Wedler E."/>
            <person name="Wambutt R."/>
            <person name="Weitzenegger T."/>
            <person name="Pohl T."/>
            <person name="Terryn N."/>
            <person name="Gielen J."/>
            <person name="Villarroel R."/>
            <person name="De Clercq R."/>
            <person name="van Montagu M."/>
            <person name="Lecharny A."/>
            <person name="Aubourg S."/>
            <person name="Gy I."/>
            <person name="Kreis M."/>
            <person name="Lao N."/>
            <person name="Kavanagh T."/>
            <person name="Hempel S."/>
            <person name="Kotter P."/>
            <person name="Entian K.-D."/>
            <person name="Rieger M."/>
            <person name="Schaefer M."/>
            <person name="Funk B."/>
            <person name="Mueller-Auer S."/>
            <person name="Silvey M."/>
            <person name="James R."/>
            <person name="Monfort A."/>
            <person name="Pons A."/>
            <person name="Puigdomenech P."/>
            <person name="Douka A."/>
            <person name="Voukelatou E."/>
            <person name="Milioni D."/>
            <person name="Hatzopoulos P."/>
            <person name="Piravandi E."/>
            <person name="Obermaier B."/>
            <person name="Hilbert H."/>
            <person name="Duesterhoeft A."/>
            <person name="Moores T."/>
            <person name="Jones J.D.G."/>
            <person name="Eneva T."/>
            <person name="Palme K."/>
            <person name="Benes V."/>
            <person name="Rechmann S."/>
            <person name="Ansorge W."/>
            <person name="Cooke R."/>
            <person name="Berger C."/>
            <person name="Delseny M."/>
            <person name="Voet M."/>
            <person name="Volckaert G."/>
            <person name="Mewes H.-W."/>
            <person name="Klosterman S."/>
            <person name="Schueller C."/>
            <person name="Chalwatzis N."/>
        </authorList>
    </citation>
    <scope>NUCLEOTIDE SEQUENCE [LARGE SCALE GENOMIC DNA]</scope>
    <source>
        <strain>cv. Columbia</strain>
    </source>
</reference>
<reference key="2">
    <citation type="journal article" date="1999" name="Nature">
        <title>Sequence and analysis of chromosome 4 of the plant Arabidopsis thaliana.</title>
        <authorList>
            <person name="Mayer K.F.X."/>
            <person name="Schueller C."/>
            <person name="Wambutt R."/>
            <person name="Murphy G."/>
            <person name="Volckaert G."/>
            <person name="Pohl T."/>
            <person name="Duesterhoeft A."/>
            <person name="Stiekema W."/>
            <person name="Entian K.-D."/>
            <person name="Terryn N."/>
            <person name="Harris B."/>
            <person name="Ansorge W."/>
            <person name="Brandt P."/>
            <person name="Grivell L.A."/>
            <person name="Rieger M."/>
            <person name="Weichselgartner M."/>
            <person name="de Simone V."/>
            <person name="Obermaier B."/>
            <person name="Mache R."/>
            <person name="Mueller M."/>
            <person name="Kreis M."/>
            <person name="Delseny M."/>
            <person name="Puigdomenech P."/>
            <person name="Watson M."/>
            <person name="Schmidtheini T."/>
            <person name="Reichert B."/>
            <person name="Portetelle D."/>
            <person name="Perez-Alonso M."/>
            <person name="Boutry M."/>
            <person name="Bancroft I."/>
            <person name="Vos P."/>
            <person name="Hoheisel J."/>
            <person name="Zimmermann W."/>
            <person name="Wedler H."/>
            <person name="Ridley P."/>
            <person name="Langham S.-A."/>
            <person name="McCullagh B."/>
            <person name="Bilham L."/>
            <person name="Robben J."/>
            <person name="van der Schueren J."/>
            <person name="Grymonprez B."/>
            <person name="Chuang Y.-J."/>
            <person name="Vandenbussche F."/>
            <person name="Braeken M."/>
            <person name="Weltjens I."/>
            <person name="Voet M."/>
            <person name="Bastiaens I."/>
            <person name="Aert R."/>
            <person name="Defoor E."/>
            <person name="Weitzenegger T."/>
            <person name="Bothe G."/>
            <person name="Ramsperger U."/>
            <person name="Hilbert H."/>
            <person name="Braun M."/>
            <person name="Holzer E."/>
            <person name="Brandt A."/>
            <person name="Peters S."/>
            <person name="van Staveren M."/>
            <person name="Dirkse W."/>
            <person name="Mooijman P."/>
            <person name="Klein Lankhorst R."/>
            <person name="Rose M."/>
            <person name="Hauf J."/>
            <person name="Koetter P."/>
            <person name="Berneiser S."/>
            <person name="Hempel S."/>
            <person name="Feldpausch M."/>
            <person name="Lamberth S."/>
            <person name="Van den Daele H."/>
            <person name="De Keyser A."/>
            <person name="Buysshaert C."/>
            <person name="Gielen J."/>
            <person name="Villarroel R."/>
            <person name="De Clercq R."/>
            <person name="van Montagu M."/>
            <person name="Rogers J."/>
            <person name="Cronin A."/>
            <person name="Quail M.A."/>
            <person name="Bray-Allen S."/>
            <person name="Clark L."/>
            <person name="Doggett J."/>
            <person name="Hall S."/>
            <person name="Kay M."/>
            <person name="Lennard N."/>
            <person name="McLay K."/>
            <person name="Mayes R."/>
            <person name="Pettett A."/>
            <person name="Rajandream M.A."/>
            <person name="Lyne M."/>
            <person name="Benes V."/>
            <person name="Rechmann S."/>
            <person name="Borkova D."/>
            <person name="Bloecker H."/>
            <person name="Scharfe M."/>
            <person name="Grimm M."/>
            <person name="Loehnert T.-H."/>
            <person name="Dose S."/>
            <person name="de Haan M."/>
            <person name="Maarse A.C."/>
            <person name="Schaefer M."/>
            <person name="Mueller-Auer S."/>
            <person name="Gabel C."/>
            <person name="Fuchs M."/>
            <person name="Fartmann B."/>
            <person name="Granderath K."/>
            <person name="Dauner D."/>
            <person name="Herzl A."/>
            <person name="Neumann S."/>
            <person name="Argiriou A."/>
            <person name="Vitale D."/>
            <person name="Liguori R."/>
            <person name="Piravandi E."/>
            <person name="Massenet O."/>
            <person name="Quigley F."/>
            <person name="Clabauld G."/>
            <person name="Muendlein A."/>
            <person name="Felber R."/>
            <person name="Schnabl S."/>
            <person name="Hiller R."/>
            <person name="Schmidt W."/>
            <person name="Lecharny A."/>
            <person name="Aubourg S."/>
            <person name="Chefdor F."/>
            <person name="Cooke R."/>
            <person name="Berger C."/>
            <person name="Monfort A."/>
            <person name="Casacuberta E."/>
            <person name="Gibbons T."/>
            <person name="Weber N."/>
            <person name="Vandenbol M."/>
            <person name="Bargues M."/>
            <person name="Terol J."/>
            <person name="Torres A."/>
            <person name="Perez-Perez A."/>
            <person name="Purnelle B."/>
            <person name="Bent E."/>
            <person name="Johnson S."/>
            <person name="Tacon D."/>
            <person name="Jesse T."/>
            <person name="Heijnen L."/>
            <person name="Schwarz S."/>
            <person name="Scholler P."/>
            <person name="Heber S."/>
            <person name="Francs P."/>
            <person name="Bielke C."/>
            <person name="Frishman D."/>
            <person name="Haase D."/>
            <person name="Lemcke K."/>
            <person name="Mewes H.-W."/>
            <person name="Stocker S."/>
            <person name="Zaccaria P."/>
            <person name="Bevan M."/>
            <person name="Wilson R.K."/>
            <person name="de la Bastide M."/>
            <person name="Habermann K."/>
            <person name="Parnell L."/>
            <person name="Dedhia N."/>
            <person name="Gnoj L."/>
            <person name="Schutz K."/>
            <person name="Huang E."/>
            <person name="Spiegel L."/>
            <person name="Sekhon M."/>
            <person name="Murray J."/>
            <person name="Sheet P."/>
            <person name="Cordes M."/>
            <person name="Abu-Threideh J."/>
            <person name="Stoneking T."/>
            <person name="Kalicki J."/>
            <person name="Graves T."/>
            <person name="Harmon G."/>
            <person name="Edwards J."/>
            <person name="Latreille P."/>
            <person name="Courtney L."/>
            <person name="Cloud J."/>
            <person name="Abbott A."/>
            <person name="Scott K."/>
            <person name="Johnson D."/>
            <person name="Minx P."/>
            <person name="Bentley D."/>
            <person name="Fulton B."/>
            <person name="Miller N."/>
            <person name="Greco T."/>
            <person name="Kemp K."/>
            <person name="Kramer J."/>
            <person name="Fulton L."/>
            <person name="Mardis E."/>
            <person name="Dante M."/>
            <person name="Pepin K."/>
            <person name="Hillier L.W."/>
            <person name="Nelson J."/>
            <person name="Spieth J."/>
            <person name="Ryan E."/>
            <person name="Andrews S."/>
            <person name="Geisel C."/>
            <person name="Layman D."/>
            <person name="Du H."/>
            <person name="Ali J."/>
            <person name="Berghoff A."/>
            <person name="Jones K."/>
            <person name="Drone K."/>
            <person name="Cotton M."/>
            <person name="Joshu C."/>
            <person name="Antonoiu B."/>
            <person name="Zidanic M."/>
            <person name="Strong C."/>
            <person name="Sun H."/>
            <person name="Lamar B."/>
            <person name="Yordan C."/>
            <person name="Ma P."/>
            <person name="Zhong J."/>
            <person name="Preston R."/>
            <person name="Vil D."/>
            <person name="Shekher M."/>
            <person name="Matero A."/>
            <person name="Shah R."/>
            <person name="Swaby I.K."/>
            <person name="O'Shaughnessy A."/>
            <person name="Rodriguez M."/>
            <person name="Hoffman J."/>
            <person name="Till S."/>
            <person name="Granat S."/>
            <person name="Shohdy N."/>
            <person name="Hasegawa A."/>
            <person name="Hameed A."/>
            <person name="Lodhi M."/>
            <person name="Johnson A."/>
            <person name="Chen E."/>
            <person name="Marra M.A."/>
            <person name="Martienssen R."/>
            <person name="McCombie W.R."/>
        </authorList>
    </citation>
    <scope>NUCLEOTIDE SEQUENCE [LARGE SCALE GENOMIC DNA]</scope>
    <source>
        <strain>cv. Columbia</strain>
    </source>
</reference>
<reference key="3">
    <citation type="journal article" date="2017" name="Plant J.">
        <title>Araport11: a complete reannotation of the Arabidopsis thaliana reference genome.</title>
        <authorList>
            <person name="Cheng C.Y."/>
            <person name="Krishnakumar V."/>
            <person name="Chan A.P."/>
            <person name="Thibaud-Nissen F."/>
            <person name="Schobel S."/>
            <person name="Town C.D."/>
        </authorList>
    </citation>
    <scope>GENOME REANNOTATION</scope>
    <source>
        <strain>cv. Columbia</strain>
    </source>
</reference>
<reference key="4">
    <citation type="journal article" date="2010" name="Mol. Syst. Biol.">
        <title>Targeted interactomics reveals a complex core cell cycle machinery in Arabidopsis thaliana.</title>
        <authorList>
            <person name="Van Leene J."/>
            <person name="Hollunder J."/>
            <person name="Eeckhout D."/>
            <person name="Persiau G."/>
            <person name="Van De Slijke E."/>
            <person name="Stals H."/>
            <person name="Van Isterdael G."/>
            <person name="Verkest A."/>
            <person name="Neirynck S."/>
            <person name="Buffel Y."/>
            <person name="De Bodt S."/>
            <person name="Maere S."/>
            <person name="Laukens K."/>
            <person name="Pharazyn A."/>
            <person name="Ferreira P.C.G."/>
            <person name="Eloy N."/>
            <person name="Renne C."/>
            <person name="Meyer C."/>
            <person name="Faure J.-D."/>
            <person name="Steinbrenner J."/>
            <person name="Beynon J."/>
            <person name="Larkin J.C."/>
            <person name="Van de Peer Y."/>
            <person name="Hilson P."/>
            <person name="Kuiper M."/>
            <person name="De Veylder L."/>
            <person name="Van Onckelen H."/>
            <person name="Inze D."/>
            <person name="Witters E."/>
            <person name="De Jaeger G."/>
        </authorList>
    </citation>
    <scope>FUNCTION</scope>
    <scope>INTERACTION WITH KIN14B; CDKA-1; CKS1 AND CKS2</scope>
    <scope>SUBCELLULAR LOCATION</scope>
</reference>